<dbReference type="EC" id="2.1.3.-" evidence="1"/>
<dbReference type="EMBL" id="CP000155">
    <property type="protein sequence ID" value="ABC29064.1"/>
    <property type="molecule type" value="Genomic_DNA"/>
</dbReference>
<dbReference type="RefSeq" id="WP_011396133.1">
    <property type="nucleotide sequence ID" value="NC_007645.1"/>
</dbReference>
<dbReference type="SMR" id="Q2SJW0"/>
<dbReference type="STRING" id="349521.HCH_02238"/>
<dbReference type="KEGG" id="hch:HCH_02238"/>
<dbReference type="eggNOG" id="COG2226">
    <property type="taxonomic scope" value="Bacteria"/>
</dbReference>
<dbReference type="HOGENOM" id="CLU_078475_0_0_6"/>
<dbReference type="OrthoDB" id="9779941at2"/>
<dbReference type="Proteomes" id="UP000000238">
    <property type="component" value="Chromosome"/>
</dbReference>
<dbReference type="GO" id="GO:0016743">
    <property type="term" value="F:carboxyl- or carbamoyltransferase activity"/>
    <property type="evidence" value="ECO:0007669"/>
    <property type="project" value="UniProtKB-UniRule"/>
</dbReference>
<dbReference type="GO" id="GO:1904047">
    <property type="term" value="F:S-adenosyl-L-methionine binding"/>
    <property type="evidence" value="ECO:0007669"/>
    <property type="project" value="UniProtKB-UniRule"/>
</dbReference>
<dbReference type="GO" id="GO:0002098">
    <property type="term" value="P:tRNA wobble uridine modification"/>
    <property type="evidence" value="ECO:0007669"/>
    <property type="project" value="InterPro"/>
</dbReference>
<dbReference type="CDD" id="cd02440">
    <property type="entry name" value="AdoMet_MTases"/>
    <property type="match status" value="1"/>
</dbReference>
<dbReference type="Gene3D" id="3.40.50.150">
    <property type="entry name" value="Vaccinia Virus protein VP39"/>
    <property type="match status" value="1"/>
</dbReference>
<dbReference type="HAMAP" id="MF_01589">
    <property type="entry name" value="Cx_SAM_synthase"/>
    <property type="match status" value="1"/>
</dbReference>
<dbReference type="InterPro" id="IPR005271">
    <property type="entry name" value="CmoA"/>
</dbReference>
<dbReference type="InterPro" id="IPR041698">
    <property type="entry name" value="Methyltransf_25"/>
</dbReference>
<dbReference type="InterPro" id="IPR029063">
    <property type="entry name" value="SAM-dependent_MTases_sf"/>
</dbReference>
<dbReference type="NCBIfam" id="TIGR00740">
    <property type="entry name" value="carboxy-S-adenosyl-L-methionine synthase CmoA"/>
    <property type="match status" value="1"/>
</dbReference>
<dbReference type="PANTHER" id="PTHR43861:SF2">
    <property type="entry name" value="CARBOXY-S-ADENOSYL-L-METHIONINE SYNTHASE"/>
    <property type="match status" value="1"/>
</dbReference>
<dbReference type="PANTHER" id="PTHR43861">
    <property type="entry name" value="TRANS-ACONITATE 2-METHYLTRANSFERASE-RELATED"/>
    <property type="match status" value="1"/>
</dbReference>
<dbReference type="Pfam" id="PF13649">
    <property type="entry name" value="Methyltransf_25"/>
    <property type="match status" value="1"/>
</dbReference>
<dbReference type="PIRSF" id="PIRSF006325">
    <property type="entry name" value="MeTrfase_bac"/>
    <property type="match status" value="1"/>
</dbReference>
<dbReference type="SUPFAM" id="SSF53335">
    <property type="entry name" value="S-adenosyl-L-methionine-dependent methyltransferases"/>
    <property type="match status" value="1"/>
</dbReference>
<evidence type="ECO:0000255" key="1">
    <source>
        <dbReference type="HAMAP-Rule" id="MF_01589"/>
    </source>
</evidence>
<proteinExistence type="inferred from homology"/>
<protein>
    <recommendedName>
        <fullName evidence="1">Carboxy-S-adenosyl-L-methionine synthase</fullName>
        <shortName evidence="1">Cx-SAM synthase</shortName>
        <ecNumber evidence="1">2.1.3.-</ecNumber>
    </recommendedName>
</protein>
<organism>
    <name type="scientific">Hahella chejuensis (strain KCTC 2396)</name>
    <dbReference type="NCBI Taxonomy" id="349521"/>
    <lineage>
        <taxon>Bacteria</taxon>
        <taxon>Pseudomonadati</taxon>
        <taxon>Pseudomonadota</taxon>
        <taxon>Gammaproteobacteria</taxon>
        <taxon>Oceanospirillales</taxon>
        <taxon>Hahellaceae</taxon>
        <taxon>Hahella</taxon>
    </lineage>
</organism>
<comment type="function">
    <text evidence="1">Catalyzes the conversion of S-adenosyl-L-methionine (SAM) to carboxy-S-adenosyl-L-methionine (Cx-SAM).</text>
</comment>
<comment type="catalytic activity">
    <reaction evidence="1">
        <text>prephenate + S-adenosyl-L-methionine = carboxy-S-adenosyl-L-methionine + 3-phenylpyruvate + H2O</text>
        <dbReference type="Rhea" id="RHEA:51692"/>
        <dbReference type="ChEBI" id="CHEBI:15377"/>
        <dbReference type="ChEBI" id="CHEBI:18005"/>
        <dbReference type="ChEBI" id="CHEBI:29934"/>
        <dbReference type="ChEBI" id="CHEBI:59789"/>
        <dbReference type="ChEBI" id="CHEBI:134278"/>
    </reaction>
</comment>
<comment type="subunit">
    <text evidence="1">Homodimer.</text>
</comment>
<comment type="similarity">
    <text evidence="1">Belongs to the class I-like SAM-binding methyltransferase superfamily. Cx-SAM synthase family.</text>
</comment>
<keyword id="KW-1185">Reference proteome</keyword>
<keyword id="KW-0949">S-adenosyl-L-methionine</keyword>
<keyword id="KW-0808">Transferase</keyword>
<accession>Q2SJW0</accession>
<gene>
    <name evidence="1" type="primary">cmoA</name>
    <name type="ordered locus">HCH_02238</name>
</gene>
<name>CMOA_HAHCH</name>
<feature type="chain" id="PRO_0000314337" description="Carboxy-S-adenosyl-L-methionine synthase">
    <location>
        <begin position="1"/>
        <end position="248"/>
    </location>
</feature>
<feature type="binding site" evidence="1">
    <location>
        <position position="40"/>
    </location>
    <ligand>
        <name>S-adenosyl-L-methionine</name>
        <dbReference type="ChEBI" id="CHEBI:59789"/>
    </ligand>
</feature>
<feature type="binding site" evidence="1">
    <location>
        <begin position="65"/>
        <end position="67"/>
    </location>
    <ligand>
        <name>S-adenosyl-L-methionine</name>
        <dbReference type="ChEBI" id="CHEBI:59789"/>
    </ligand>
</feature>
<feature type="binding site" evidence="1">
    <location>
        <begin position="95"/>
        <end position="96"/>
    </location>
    <ligand>
        <name>S-adenosyl-L-methionine</name>
        <dbReference type="ChEBI" id="CHEBI:59789"/>
    </ligand>
</feature>
<feature type="binding site" evidence="1">
    <location>
        <begin position="123"/>
        <end position="124"/>
    </location>
    <ligand>
        <name>S-adenosyl-L-methionine</name>
        <dbReference type="ChEBI" id="CHEBI:59789"/>
    </ligand>
</feature>
<feature type="binding site" evidence="1">
    <location>
        <position position="138"/>
    </location>
    <ligand>
        <name>S-adenosyl-L-methionine</name>
        <dbReference type="ChEBI" id="CHEBI:59789"/>
    </ligand>
</feature>
<feature type="binding site" evidence="1">
    <location>
        <position position="205"/>
    </location>
    <ligand>
        <name>S-adenosyl-L-methionine</name>
        <dbReference type="ChEBI" id="CHEBI:59789"/>
    </ligand>
</feature>
<sequence length="248" mass="27939">MSDSKDQIYQDAKGAVGAFEFDERVAHVFTDMINRSVPGYAMMLEMIGVISRRYAQAGAHCYDLGCSLGASTLAIRSNLKHFNESDNKPKVIGVDNSAAMVERCRVNMERMPSVIPTEILCQDILSTPIENASIAVMNFTLQFIPLAQREDLLHRIAVNMKPGGAMVLSEKIEFADTDKQHTLFDLHHDFKRSRGYSDLEIAQKRSALENVLVPETIEAHIERLQRAGFSQAYLWFQCFNFVSFLAIK</sequence>
<reference key="1">
    <citation type="journal article" date="2005" name="Nucleic Acids Res.">
        <title>Genomic blueprint of Hahella chejuensis, a marine microbe producing an algicidal agent.</title>
        <authorList>
            <person name="Jeong H."/>
            <person name="Yim J.H."/>
            <person name="Lee C."/>
            <person name="Choi S.-H."/>
            <person name="Park Y.K."/>
            <person name="Yoon S.H."/>
            <person name="Hur C.-G."/>
            <person name="Kang H.-Y."/>
            <person name="Kim D."/>
            <person name="Lee H.H."/>
            <person name="Park K.H."/>
            <person name="Park S.-H."/>
            <person name="Park H.-S."/>
            <person name="Lee H.K."/>
            <person name="Oh T.K."/>
            <person name="Kim J.F."/>
        </authorList>
    </citation>
    <scope>NUCLEOTIDE SEQUENCE [LARGE SCALE GENOMIC DNA]</scope>
    <source>
        <strain>KCTC 2396</strain>
    </source>
</reference>